<name>Y57M_ECOLX</name>
<feature type="chain" id="PRO_0000066094" description="Uncharacterized 7.3 kDa protein in Eco57IM 5'region">
    <location>
        <begin position="1"/>
        <end position="62"/>
    </location>
</feature>
<proteinExistence type="predicted"/>
<reference key="1">
    <citation type="journal article" date="1992" name="Nucleic Acids Res.">
        <title>Cloning and sequence analysis of the genes coding for Eco57I type IV restriction-modification enzymes.</title>
        <authorList>
            <person name="Janulaitis A."/>
            <person name="Vaisvila R."/>
            <person name="Timinskas A."/>
            <person name="Klimasauskas S."/>
            <person name="Butkus V."/>
        </authorList>
    </citation>
    <scope>NUCLEOTIDE SEQUENCE [GENOMIC DNA]</scope>
    <source>
        <strain>RFL57</strain>
    </source>
</reference>
<dbReference type="EMBL" id="M74821">
    <property type="protein sequence ID" value="AAA23387.1"/>
    <property type="molecule type" value="Genomic_DNA"/>
</dbReference>
<dbReference type="EMBL" id="X61122">
    <property type="protein sequence ID" value="CAA43432.1"/>
    <property type="molecule type" value="Genomic_DNA"/>
</dbReference>
<dbReference type="PIR" id="S26677">
    <property type="entry name" value="S26677"/>
</dbReference>
<dbReference type="SMR" id="P25287"/>
<accession>P25287</accession>
<organism>
    <name type="scientific">Escherichia coli</name>
    <dbReference type="NCBI Taxonomy" id="562"/>
    <lineage>
        <taxon>Bacteria</taxon>
        <taxon>Pseudomonadati</taxon>
        <taxon>Pseudomonadota</taxon>
        <taxon>Gammaproteobacteria</taxon>
        <taxon>Enterobacterales</taxon>
        <taxon>Enterobacteriaceae</taxon>
        <taxon>Escherichia</taxon>
    </lineage>
</organism>
<sequence length="62" mass="7281">MAKGESERIVLEVEPELKKALYSVLAMEQKTLKDWFVDKAQEHICEKKSELIERFSKVDNEI</sequence>
<protein>
    <recommendedName>
        <fullName>Uncharacterized 7.3 kDa protein in Eco57IM 5'region</fullName>
    </recommendedName>
    <alternativeName>
        <fullName>ORF S</fullName>
    </alternativeName>
</protein>